<reference key="1">
    <citation type="journal article" date="2005" name="J. Mammal.">
        <title>Phylogenetics of the new world rodent family Heteromyidae.</title>
        <authorList>
            <person name="Alexander L.F."/>
            <person name="Riddle B.R."/>
        </authorList>
    </citation>
    <scope>NUCLEOTIDE SEQUENCE [GENOMIC DNA]</scope>
    <source>
        <strain>Isolate LVT 1210</strain>
    </source>
</reference>
<organism>
    <name type="scientific">Chaetodipus baileyi</name>
    <name type="common">Bailey's pocket mouse</name>
    <name type="synonym">Perognathus baileyi</name>
    <dbReference type="NCBI Taxonomy" id="145407"/>
    <lineage>
        <taxon>Eukaryota</taxon>
        <taxon>Metazoa</taxon>
        <taxon>Chordata</taxon>
        <taxon>Craniata</taxon>
        <taxon>Vertebrata</taxon>
        <taxon>Euteleostomi</taxon>
        <taxon>Mammalia</taxon>
        <taxon>Eutheria</taxon>
        <taxon>Euarchontoglires</taxon>
        <taxon>Glires</taxon>
        <taxon>Rodentia</taxon>
        <taxon>Castorimorpha</taxon>
        <taxon>Heteromyidae</taxon>
        <taxon>Perognathinae</taxon>
        <taxon>Chaetodipus</taxon>
    </lineage>
</organism>
<comment type="function">
    <text evidence="2">Component of the ubiquinol-cytochrome c reductase complex (complex III or cytochrome b-c1 complex) that is part of the mitochondrial respiratory chain. The b-c1 complex mediates electron transfer from ubiquinol to cytochrome c. Contributes to the generation of a proton gradient across the mitochondrial membrane that is then used for ATP synthesis.</text>
</comment>
<comment type="cofactor">
    <cofactor evidence="2">
        <name>heme b</name>
        <dbReference type="ChEBI" id="CHEBI:60344"/>
    </cofactor>
    <text evidence="2">Binds 2 heme b groups non-covalently.</text>
</comment>
<comment type="subunit">
    <text evidence="2">The cytochrome bc1 complex contains 11 subunits: 3 respiratory subunits (MT-CYB, CYC1 and UQCRFS1), 2 core proteins (UQCRC1 and UQCRC2) and 6 low-molecular weight proteins (UQCRH/QCR6, UQCRB/QCR7, UQCRQ/QCR8, UQCR10/QCR9, UQCR11/QCR10 and a cleavage product of UQCRFS1). This cytochrome bc1 complex then forms a dimer.</text>
</comment>
<comment type="subcellular location">
    <subcellularLocation>
        <location evidence="2">Mitochondrion inner membrane</location>
        <topology evidence="2">Multi-pass membrane protein</topology>
    </subcellularLocation>
</comment>
<comment type="miscellaneous">
    <text evidence="1">Heme 1 (or BL or b562) is low-potential and absorbs at about 562 nm, and heme 2 (or BH or b566) is high-potential and absorbs at about 566 nm.</text>
</comment>
<comment type="similarity">
    <text evidence="3 4">Belongs to the cytochrome b family.</text>
</comment>
<comment type="caution">
    <text evidence="2">The full-length protein contains only eight transmembrane helices, not nine as predicted by bioinformatics tools.</text>
</comment>
<evidence type="ECO:0000250" key="1"/>
<evidence type="ECO:0000250" key="2">
    <source>
        <dbReference type="UniProtKB" id="P00157"/>
    </source>
</evidence>
<evidence type="ECO:0000255" key="3">
    <source>
        <dbReference type="PROSITE-ProRule" id="PRU00967"/>
    </source>
</evidence>
<evidence type="ECO:0000255" key="4">
    <source>
        <dbReference type="PROSITE-ProRule" id="PRU00968"/>
    </source>
</evidence>
<keyword id="KW-0249">Electron transport</keyword>
<keyword id="KW-0349">Heme</keyword>
<keyword id="KW-0408">Iron</keyword>
<keyword id="KW-0472">Membrane</keyword>
<keyword id="KW-0479">Metal-binding</keyword>
<keyword id="KW-0496">Mitochondrion</keyword>
<keyword id="KW-0999">Mitochondrion inner membrane</keyword>
<keyword id="KW-0679">Respiratory chain</keyword>
<keyword id="KW-0812">Transmembrane</keyword>
<keyword id="KW-1133">Transmembrane helix</keyword>
<keyword id="KW-0813">Transport</keyword>
<keyword id="KW-0830">Ubiquinone</keyword>
<protein>
    <recommendedName>
        <fullName>Cytochrome b</fullName>
    </recommendedName>
    <alternativeName>
        <fullName>Complex III subunit 3</fullName>
    </alternativeName>
    <alternativeName>
        <fullName>Complex III subunit III</fullName>
    </alternativeName>
    <alternativeName>
        <fullName>Cytochrome b-c1 complex subunit 3</fullName>
    </alternativeName>
    <alternativeName>
        <fullName>Ubiquinol-cytochrome-c reductase complex cytochrome b subunit</fullName>
    </alternativeName>
</protein>
<accession>Q508L0</accession>
<sequence>MTITRKSHPLMKMINHAFIDLPAPSNISSWWNFGSLLGLCLMIQIASGLFLAMHYTSDTLTAFSSVAHICRDVNYGWLIRYIHANGASLFFVCLYLHIGRGIYYGSYMYKETWNIGIILLFLTMATAFMGYVLPWGQMSFWGATVITNLLSAIPYVGTNLVEWIWGGFSVDKATLTRFFAFHFILPFIIAAMAMVHLLFLHETGSNNPLGIPSNSDKIPFHPYYTTKDLLGIFILLAFFLTFVLFFPDLLGDPDNYSPANPLNTPPHIKPEWYFLFAYAILRSIPNKLGGVIALVLSILILALFPLLHTANQRSMMFRPISQILFWTLVSDLMILTWIGGQPVEPPFIVIGQVASILYFSIILILMPVAGLIENKLIKW</sequence>
<dbReference type="EMBL" id="AY926393">
    <property type="protein sequence ID" value="AAY23236.1"/>
    <property type="molecule type" value="Genomic_DNA"/>
</dbReference>
<dbReference type="SMR" id="Q508L0"/>
<dbReference type="GO" id="GO:0005743">
    <property type="term" value="C:mitochondrial inner membrane"/>
    <property type="evidence" value="ECO:0007669"/>
    <property type="project" value="UniProtKB-SubCell"/>
</dbReference>
<dbReference type="GO" id="GO:0045275">
    <property type="term" value="C:respiratory chain complex III"/>
    <property type="evidence" value="ECO:0007669"/>
    <property type="project" value="InterPro"/>
</dbReference>
<dbReference type="GO" id="GO:0046872">
    <property type="term" value="F:metal ion binding"/>
    <property type="evidence" value="ECO:0007669"/>
    <property type="project" value="UniProtKB-KW"/>
</dbReference>
<dbReference type="GO" id="GO:0008121">
    <property type="term" value="F:ubiquinol-cytochrome-c reductase activity"/>
    <property type="evidence" value="ECO:0007669"/>
    <property type="project" value="InterPro"/>
</dbReference>
<dbReference type="GO" id="GO:0006122">
    <property type="term" value="P:mitochondrial electron transport, ubiquinol to cytochrome c"/>
    <property type="evidence" value="ECO:0007669"/>
    <property type="project" value="TreeGrafter"/>
</dbReference>
<dbReference type="CDD" id="cd00290">
    <property type="entry name" value="cytochrome_b_C"/>
    <property type="match status" value="1"/>
</dbReference>
<dbReference type="CDD" id="cd00284">
    <property type="entry name" value="Cytochrome_b_N"/>
    <property type="match status" value="1"/>
</dbReference>
<dbReference type="FunFam" id="1.20.810.10:FF:000002">
    <property type="entry name" value="Cytochrome b"/>
    <property type="match status" value="1"/>
</dbReference>
<dbReference type="Gene3D" id="1.20.810.10">
    <property type="entry name" value="Cytochrome Bc1 Complex, Chain C"/>
    <property type="match status" value="1"/>
</dbReference>
<dbReference type="InterPro" id="IPR005798">
    <property type="entry name" value="Cyt_b/b6_C"/>
</dbReference>
<dbReference type="InterPro" id="IPR036150">
    <property type="entry name" value="Cyt_b/b6_C_sf"/>
</dbReference>
<dbReference type="InterPro" id="IPR005797">
    <property type="entry name" value="Cyt_b/b6_N"/>
</dbReference>
<dbReference type="InterPro" id="IPR027387">
    <property type="entry name" value="Cytb/b6-like_sf"/>
</dbReference>
<dbReference type="InterPro" id="IPR030689">
    <property type="entry name" value="Cytochrome_b"/>
</dbReference>
<dbReference type="InterPro" id="IPR048260">
    <property type="entry name" value="Cytochrome_b_C_euk/bac"/>
</dbReference>
<dbReference type="InterPro" id="IPR048259">
    <property type="entry name" value="Cytochrome_b_N_euk/bac"/>
</dbReference>
<dbReference type="InterPro" id="IPR016174">
    <property type="entry name" value="Di-haem_cyt_TM"/>
</dbReference>
<dbReference type="PANTHER" id="PTHR19271">
    <property type="entry name" value="CYTOCHROME B"/>
    <property type="match status" value="1"/>
</dbReference>
<dbReference type="PANTHER" id="PTHR19271:SF16">
    <property type="entry name" value="CYTOCHROME B"/>
    <property type="match status" value="1"/>
</dbReference>
<dbReference type="Pfam" id="PF00032">
    <property type="entry name" value="Cytochrom_B_C"/>
    <property type="match status" value="1"/>
</dbReference>
<dbReference type="Pfam" id="PF00033">
    <property type="entry name" value="Cytochrome_B"/>
    <property type="match status" value="1"/>
</dbReference>
<dbReference type="PIRSF" id="PIRSF038885">
    <property type="entry name" value="COB"/>
    <property type="match status" value="1"/>
</dbReference>
<dbReference type="SUPFAM" id="SSF81648">
    <property type="entry name" value="a domain/subunit of cytochrome bc1 complex (Ubiquinol-cytochrome c reductase)"/>
    <property type="match status" value="1"/>
</dbReference>
<dbReference type="SUPFAM" id="SSF81342">
    <property type="entry name" value="Transmembrane di-heme cytochromes"/>
    <property type="match status" value="1"/>
</dbReference>
<dbReference type="PROSITE" id="PS51003">
    <property type="entry name" value="CYTB_CTER"/>
    <property type="match status" value="1"/>
</dbReference>
<dbReference type="PROSITE" id="PS51002">
    <property type="entry name" value="CYTB_NTER"/>
    <property type="match status" value="1"/>
</dbReference>
<name>CYB_CHABA</name>
<proteinExistence type="inferred from homology"/>
<feature type="chain" id="PRO_0000257879" description="Cytochrome b">
    <location>
        <begin position="1"/>
        <end position="379"/>
    </location>
</feature>
<feature type="transmembrane region" description="Helical" evidence="2">
    <location>
        <begin position="33"/>
        <end position="53"/>
    </location>
</feature>
<feature type="transmembrane region" description="Helical" evidence="2">
    <location>
        <begin position="77"/>
        <end position="98"/>
    </location>
</feature>
<feature type="transmembrane region" description="Helical" evidence="2">
    <location>
        <begin position="113"/>
        <end position="133"/>
    </location>
</feature>
<feature type="transmembrane region" description="Helical" evidence="2">
    <location>
        <begin position="178"/>
        <end position="198"/>
    </location>
</feature>
<feature type="transmembrane region" description="Helical" evidence="2">
    <location>
        <begin position="226"/>
        <end position="246"/>
    </location>
</feature>
<feature type="transmembrane region" description="Helical" evidence="2">
    <location>
        <begin position="288"/>
        <end position="308"/>
    </location>
</feature>
<feature type="transmembrane region" description="Helical" evidence="2">
    <location>
        <begin position="320"/>
        <end position="340"/>
    </location>
</feature>
<feature type="transmembrane region" description="Helical" evidence="2">
    <location>
        <begin position="347"/>
        <end position="367"/>
    </location>
</feature>
<feature type="binding site" description="axial binding residue" evidence="2">
    <location>
        <position position="83"/>
    </location>
    <ligand>
        <name>heme b</name>
        <dbReference type="ChEBI" id="CHEBI:60344"/>
        <label>b562</label>
    </ligand>
    <ligandPart>
        <name>Fe</name>
        <dbReference type="ChEBI" id="CHEBI:18248"/>
    </ligandPart>
</feature>
<feature type="binding site" description="axial binding residue" evidence="2">
    <location>
        <position position="97"/>
    </location>
    <ligand>
        <name>heme b</name>
        <dbReference type="ChEBI" id="CHEBI:60344"/>
        <label>b566</label>
    </ligand>
    <ligandPart>
        <name>Fe</name>
        <dbReference type="ChEBI" id="CHEBI:18248"/>
    </ligandPart>
</feature>
<feature type="binding site" description="axial binding residue" evidence="2">
    <location>
        <position position="182"/>
    </location>
    <ligand>
        <name>heme b</name>
        <dbReference type="ChEBI" id="CHEBI:60344"/>
        <label>b562</label>
    </ligand>
    <ligandPart>
        <name>Fe</name>
        <dbReference type="ChEBI" id="CHEBI:18248"/>
    </ligandPart>
</feature>
<feature type="binding site" description="axial binding residue" evidence="2">
    <location>
        <position position="196"/>
    </location>
    <ligand>
        <name>heme b</name>
        <dbReference type="ChEBI" id="CHEBI:60344"/>
        <label>b566</label>
    </ligand>
    <ligandPart>
        <name>Fe</name>
        <dbReference type="ChEBI" id="CHEBI:18248"/>
    </ligandPart>
</feature>
<feature type="binding site" evidence="2">
    <location>
        <position position="201"/>
    </location>
    <ligand>
        <name>a ubiquinone</name>
        <dbReference type="ChEBI" id="CHEBI:16389"/>
    </ligand>
</feature>
<geneLocation type="mitochondrion"/>
<gene>
    <name type="primary">MT-CYB</name>
    <name type="synonym">COB</name>
    <name type="synonym">CYTB</name>
    <name type="synonym">MTCYB</name>
</gene>